<comment type="function">
    <text evidence="2">Serves as substrate adapter subunit in the E3 ubiquitin ligase complex ZYG11B-CUL2-Elongin BC. Acts redudantly with ZYG11B to target substrates bearing N-terminal glycine degrons for proteasomal degradation. Involved in the clearance of proteolytic fragments generated by caspase cleavage during apoptosis since N-terminal glycine degrons are strongly enriched at caspase cleavage sites. Also important in the quality control of protein N-myristoylation in which N-terminal glycine degrons are conditionally exposed after a failure of N-myristoylation.</text>
</comment>
<comment type="subunit">
    <text evidence="1">Interacts with the ELOC-ELOB/Elongin BC complex. Part of an E3 ubiquitin ligase complex including ZER1, CUL2 and Elongin BC (By similarity).</text>
</comment>
<comment type="similarity">
    <text evidence="3">Belongs to the zyg-11 family.</text>
</comment>
<organism>
    <name type="scientific">Pongo abelii</name>
    <name type="common">Sumatran orangutan</name>
    <name type="synonym">Pongo pygmaeus abelii</name>
    <dbReference type="NCBI Taxonomy" id="9601"/>
    <lineage>
        <taxon>Eukaryota</taxon>
        <taxon>Metazoa</taxon>
        <taxon>Chordata</taxon>
        <taxon>Craniata</taxon>
        <taxon>Vertebrata</taxon>
        <taxon>Euteleostomi</taxon>
        <taxon>Mammalia</taxon>
        <taxon>Eutheria</taxon>
        <taxon>Euarchontoglires</taxon>
        <taxon>Primates</taxon>
        <taxon>Haplorrhini</taxon>
        <taxon>Catarrhini</taxon>
        <taxon>Hominidae</taxon>
        <taxon>Pongo</taxon>
    </lineage>
</organism>
<keyword id="KW-0007">Acetylation</keyword>
<keyword id="KW-0433">Leucine-rich repeat</keyword>
<keyword id="KW-1185">Reference proteome</keyword>
<keyword id="KW-0677">Repeat</keyword>
<keyword id="KW-0833">Ubl conjugation pathway</keyword>
<name>ZER1_PONAB</name>
<evidence type="ECO:0000250" key="1"/>
<evidence type="ECO:0000250" key="2">
    <source>
        <dbReference type="UniProtKB" id="Q7Z7L7"/>
    </source>
</evidence>
<evidence type="ECO:0000305" key="3"/>
<reference key="1">
    <citation type="submission" date="2004-11" db="EMBL/GenBank/DDBJ databases">
        <authorList>
            <consortium name="The German cDNA consortium"/>
        </authorList>
    </citation>
    <scope>NUCLEOTIDE SEQUENCE [LARGE SCALE MRNA]</scope>
    <source>
        <tissue>Brain cortex</tissue>
    </source>
</reference>
<dbReference type="EMBL" id="CR859054">
    <property type="protein sequence ID" value="CAH91247.1"/>
    <property type="molecule type" value="mRNA"/>
</dbReference>
<dbReference type="RefSeq" id="NP_001125736.1">
    <property type="nucleotide sequence ID" value="NM_001132264.1"/>
</dbReference>
<dbReference type="SMR" id="Q5RAG3"/>
<dbReference type="FunCoup" id="Q5RAG3">
    <property type="interactions" value="171"/>
</dbReference>
<dbReference type="STRING" id="9601.ENSPPYP00000022035"/>
<dbReference type="GeneID" id="100172661"/>
<dbReference type="KEGG" id="pon:100172661"/>
<dbReference type="CTD" id="10444"/>
<dbReference type="eggNOG" id="KOG3665">
    <property type="taxonomic scope" value="Eukaryota"/>
</dbReference>
<dbReference type="InParanoid" id="Q5RAG3"/>
<dbReference type="OrthoDB" id="5783533at2759"/>
<dbReference type="Proteomes" id="UP000001595">
    <property type="component" value="Unplaced"/>
</dbReference>
<dbReference type="GO" id="GO:0031462">
    <property type="term" value="C:Cul2-RING ubiquitin ligase complex"/>
    <property type="evidence" value="ECO:0000250"/>
    <property type="project" value="UniProtKB"/>
</dbReference>
<dbReference type="GO" id="GO:0032436">
    <property type="term" value="P:positive regulation of proteasomal ubiquitin-dependent protein catabolic process"/>
    <property type="evidence" value="ECO:0000250"/>
    <property type="project" value="UniProtKB"/>
</dbReference>
<dbReference type="GO" id="GO:0006515">
    <property type="term" value="P:protein quality control for misfolded or incompletely synthesized proteins"/>
    <property type="evidence" value="ECO:0000250"/>
    <property type="project" value="UniProtKB"/>
</dbReference>
<dbReference type="FunFam" id="1.25.10.10:FF:000111">
    <property type="entry name" value="Protein zer-1 homolog"/>
    <property type="match status" value="1"/>
</dbReference>
<dbReference type="FunFam" id="3.80.10.10:FF:000160">
    <property type="entry name" value="Protein zer-1 homolog isoform X1"/>
    <property type="match status" value="1"/>
</dbReference>
<dbReference type="FunFam" id="3.80.10.10:FF:000085">
    <property type="entry name" value="protein zer-1 homolog isoform X1"/>
    <property type="match status" value="1"/>
</dbReference>
<dbReference type="Gene3D" id="1.25.10.10">
    <property type="entry name" value="Leucine-rich Repeat Variant"/>
    <property type="match status" value="1"/>
</dbReference>
<dbReference type="Gene3D" id="3.80.10.10">
    <property type="entry name" value="Ribonuclease Inhibitor"/>
    <property type="match status" value="2"/>
</dbReference>
<dbReference type="InterPro" id="IPR011989">
    <property type="entry name" value="ARM-like"/>
</dbReference>
<dbReference type="InterPro" id="IPR016024">
    <property type="entry name" value="ARM-type_fold"/>
</dbReference>
<dbReference type="InterPro" id="IPR000225">
    <property type="entry name" value="Armadillo"/>
</dbReference>
<dbReference type="InterPro" id="IPR032675">
    <property type="entry name" value="LRR_dom_sf"/>
</dbReference>
<dbReference type="InterPro" id="IPR056845">
    <property type="entry name" value="LRR_Zer-1"/>
</dbReference>
<dbReference type="InterPro" id="IPR055142">
    <property type="entry name" value="ZER1-like_C"/>
</dbReference>
<dbReference type="InterPro" id="IPR051341">
    <property type="entry name" value="Zyg-11_UBL_adapter"/>
</dbReference>
<dbReference type="PANTHER" id="PTHR12904">
    <property type="match status" value="1"/>
</dbReference>
<dbReference type="PANTHER" id="PTHR12904:SF23">
    <property type="entry name" value="PROTEIN ZER-1 HOMOLOG"/>
    <property type="match status" value="1"/>
</dbReference>
<dbReference type="Pfam" id="PF25013">
    <property type="entry name" value="LRR_Zer-1"/>
    <property type="match status" value="1"/>
</dbReference>
<dbReference type="Pfam" id="PF22964">
    <property type="entry name" value="ZER1-like_2nd"/>
    <property type="match status" value="1"/>
</dbReference>
<dbReference type="SMART" id="SM00185">
    <property type="entry name" value="ARM"/>
    <property type="match status" value="4"/>
</dbReference>
<dbReference type="SUPFAM" id="SSF48371">
    <property type="entry name" value="ARM repeat"/>
    <property type="match status" value="1"/>
</dbReference>
<dbReference type="SUPFAM" id="SSF52047">
    <property type="entry name" value="RNI-like"/>
    <property type="match status" value="1"/>
</dbReference>
<feature type="initiator methionine" description="Removed" evidence="2">
    <location>
        <position position="1"/>
    </location>
</feature>
<feature type="chain" id="PRO_0000066600" description="Protein zer-1 homolog">
    <location>
        <begin position="2"/>
        <end position="766"/>
    </location>
</feature>
<feature type="repeat" description="LRR 1">
    <location>
        <begin position="226"/>
        <end position="245"/>
    </location>
</feature>
<feature type="repeat" description="LRR 2">
    <location>
        <begin position="246"/>
        <end position="268"/>
    </location>
</feature>
<feature type="repeat" description="LRR 3">
    <location>
        <begin position="278"/>
        <end position="302"/>
    </location>
</feature>
<feature type="repeat" description="ARM 1">
    <location>
        <begin position="427"/>
        <end position="467"/>
    </location>
</feature>
<feature type="repeat" description="ARM 2">
    <location>
        <begin position="511"/>
        <end position="556"/>
    </location>
</feature>
<feature type="repeat" description="ARM 3">
    <location>
        <begin position="558"/>
        <end position="600"/>
    </location>
</feature>
<feature type="repeat" description="ARM 4">
    <location>
        <begin position="602"/>
        <end position="643"/>
    </location>
</feature>
<feature type="repeat" description="ARM 5">
    <location>
        <begin position="714"/>
        <end position="756"/>
    </location>
</feature>
<feature type="modified residue" description="N-acetylalanine" evidence="2">
    <location>
        <position position="2"/>
    </location>
</feature>
<sequence length="766" mass="88152">MASDTPESLMALCTDFCLRNLDGTLGYLLDKETLRLHPDIFLPSEICDRLVNEYVELVNAACNFEPHESFFSLFSDPRSTRLTRIHLREDLVQDQDLEAIRKQDLVELYLTNCEKLSAKSLQTLRSFSHTLVSLSLFGCTNIFYEEENPGGCEDEYLVNPTCQVLVKDFTFEGFSRLRFLNLGRMIDWVPVESLLRPLNSLAALDLSGIQTSDAAFLTQWKDSLVSLVLYNMDLSDDHIRVIVQLHKLRHLDISRDRLSSYYKFKLTREVLSLFVQKLGNLMSLDISGHMILENCSISKMEEEAGQTSIEPSKSSIIPFRALKRPLQFLGLFENSLCRLTHIPAYKVSGDKNEEQVLNAIEAYTEHRPEITSRAINLLFDIARIERCNQLLRALKLVITALKCHKYDRNIQVTGSAALFYLTNSEYRSEQSVKLRRQVIQVVLNGMESYQEVTVQRNCCLTLCNFGIPEELEFQYRRVNELLLSILNPTRQDESIQRIAVHLCNALVCQVDNDHKEAVGKMGFVVTMLKLIQKKLLDKICDQVMEFSWSALWNITDETPDNCEMFLNFNGMKLFLDCLKEFPEKQELHRNMLGLLGNVAEVKELRPQLMTSQFISVFSNLLESKADGIEVSYNACGVLSHIMFDGPEAWGVCEPQREEVEERMWAAIQSWDINSRRNINYRSFEPILRLLPQGISPVSQHWATWALYNLVSVYPDKYCPLLIKEGGMPLLRDIIKMATARQETKEMARKVIEHCSNFKEENMDTSR</sequence>
<protein>
    <recommendedName>
        <fullName>Protein zer-1 homolog</fullName>
    </recommendedName>
    <alternativeName>
        <fullName>Zyg-11 homolog B-like protein</fullName>
    </alternativeName>
</protein>
<gene>
    <name type="primary">ZER1</name>
    <name type="synonym">ZYG11BL</name>
</gene>
<proteinExistence type="evidence at transcript level"/>
<accession>Q5RAG3</accession>